<reference key="1">
    <citation type="journal article" date="1996" name="J. Cell Biol.">
        <title>A novel calmodulin-binding protein, belonging to the WD-repeat family, is localized in dendrites of a subset of CNS neurons.</title>
        <authorList>
            <person name="Castets F."/>
            <person name="Bartoli M."/>
            <person name="Barnier J.V."/>
            <person name="Baillat G."/>
            <person name="Salin P."/>
            <person name="Moqrich A."/>
            <person name="Bourgeois J.-P."/>
            <person name="Denizot F."/>
            <person name="Rougon G."/>
            <person name="Calothy G."/>
            <person name="Monneron A."/>
        </authorList>
    </citation>
    <scope>NUCLEOTIDE SEQUENCE [MRNA]</scope>
    <scope>PROTEIN SEQUENCE OF 222-243; 258-269; 451-456; 488-494 AND 764-777</scope>
    <scope>TISSUE SPECIFICITY</scope>
    <source>
        <strain>Wistar</strain>
        <tissue>Brain</tissue>
    </source>
</reference>
<reference key="2">
    <citation type="journal article" date="2012" name="Mol. Biol. Cell">
        <title>CTTNBP2, but not CTTNBP2NL, regulates dendritic spinogenesis and synaptic distribution of the striatin-PP2A complex.</title>
        <authorList>
            <person name="Chen Y.K."/>
            <person name="Chen C.Y."/>
            <person name="Hu H.T."/>
            <person name="Hsueh Y.P."/>
        </authorList>
    </citation>
    <scope>INTERACTION WITH CTTNBP2</scope>
    <scope>SUBCELLULAR LOCATION</scope>
</reference>
<reference key="3">
    <citation type="journal article" date="2012" name="Nat. Commun.">
        <title>Quantitative maps of protein phosphorylation sites across 14 different rat organs and tissues.</title>
        <authorList>
            <person name="Lundby A."/>
            <person name="Secher A."/>
            <person name="Lage K."/>
            <person name="Nordsborg N.B."/>
            <person name="Dmytriyev A."/>
            <person name="Lundby C."/>
            <person name="Olsen J.V."/>
        </authorList>
    </citation>
    <scope>PHOSPHORYLATION [LARGE SCALE ANALYSIS] AT SER-245</scope>
    <scope>IDENTIFICATION BY MASS SPECTROMETRY [LARGE SCALE ANALYSIS]</scope>
</reference>
<accession>P70483</accession>
<name>STRN_RAT</name>
<evidence type="ECO:0000250" key="1">
    <source>
        <dbReference type="UniProtKB" id="O43815"/>
    </source>
</evidence>
<evidence type="ECO:0000250" key="2">
    <source>
        <dbReference type="UniProtKB" id="O55106"/>
    </source>
</evidence>
<evidence type="ECO:0000255" key="3"/>
<evidence type="ECO:0000256" key="4">
    <source>
        <dbReference type="SAM" id="MobiDB-lite"/>
    </source>
</evidence>
<evidence type="ECO:0000269" key="5">
    <source>
    </source>
</evidence>
<evidence type="ECO:0000269" key="6">
    <source>
    </source>
</evidence>
<evidence type="ECO:0000305" key="7"/>
<evidence type="ECO:0007744" key="8">
    <source>
    </source>
</evidence>
<gene>
    <name type="primary">Strn</name>
</gene>
<keyword id="KW-0112">Calmodulin-binding</keyword>
<keyword id="KW-0966">Cell projection</keyword>
<keyword id="KW-0175">Coiled coil</keyword>
<keyword id="KW-0963">Cytoplasm</keyword>
<keyword id="KW-0903">Direct protein sequencing</keyword>
<keyword id="KW-0472">Membrane</keyword>
<keyword id="KW-0597">Phosphoprotein</keyword>
<keyword id="KW-1185">Reference proteome</keyword>
<keyword id="KW-0677">Repeat</keyword>
<keyword id="KW-0770">Synapse</keyword>
<keyword id="KW-0853">WD repeat</keyword>
<comment type="function">
    <text evidence="1">Calmodulin-binding scaffolding protein which is the center of the striatin-interacting phosphatase and kinase (STRIPAK) complexes. STRIPAK complexes have critical roles in protein (de)phosphorylation and are regulators of multiple signaling pathways including Hippo, MAPK, nuclear receptor and cytoskeleton remodeling. Different types of STRIPAK complexes are involved in a variety of biological processes such as cell growth, differentiation, apoptosis, metabolism and immune regulation.</text>
</comment>
<comment type="subunit">
    <text evidence="1 5">Part of the core of STRIPAK complexes composed of PP2A catalytic and scaffolding subunits, the striatins (PP2A regulatory subunits), the striatin-associated proteins MOB4, STRIP1 and STRIP2, PDCD10 and members of the STE20 kinases, such as STK24 and STK26 (By similarity). Interacts with CTTNBP2; this interaction may regulate dendritic spine distribution of STRN. Activation of glutamate receptors weakens the interaction with CTTNBP2 (PubMed:23015759).</text>
</comment>
<comment type="subcellular location">
    <subcellularLocation>
        <location evidence="5">Cytoplasm</location>
    </subcellularLocation>
    <subcellularLocation>
        <location evidence="5">Membrane</location>
        <topology evidence="5">Peripheral membrane protein</topology>
    </subcellularLocation>
    <subcellularLocation>
        <location evidence="5">Cell projection</location>
        <location evidence="5">Dendritic spine</location>
    </subcellularLocation>
    <text evidence="5">CTTNBP2-binding may regulate dendritic spine distribution.</text>
</comment>
<comment type="tissue specificity">
    <text evidence="6">Mainly expressed in the central nervous system. Mostly confined in dendrites, not in axons, and is most abundant in dendritic spines.</text>
</comment>
<comment type="similarity">
    <text evidence="7">Belongs to the WD repeat striatin family.</text>
</comment>
<proteinExistence type="evidence at protein level"/>
<dbReference type="EMBL" id="X99326">
    <property type="protein sequence ID" value="CAA67701.1"/>
    <property type="molecule type" value="mRNA"/>
</dbReference>
<dbReference type="RefSeq" id="NP_062021.1">
    <property type="nucleotide sequence ID" value="NM_019148.2"/>
</dbReference>
<dbReference type="SMR" id="P70483"/>
<dbReference type="BioGRID" id="247832">
    <property type="interactions" value="3"/>
</dbReference>
<dbReference type="CORUM" id="P70483"/>
<dbReference type="FunCoup" id="P70483">
    <property type="interactions" value="3071"/>
</dbReference>
<dbReference type="MINT" id="P70483"/>
<dbReference type="STRING" id="10116.ENSRNOP00000006527"/>
<dbReference type="iPTMnet" id="P70483"/>
<dbReference type="PhosphoSitePlus" id="P70483"/>
<dbReference type="jPOST" id="P70483"/>
<dbReference type="PaxDb" id="10116-ENSRNOP00000006527"/>
<dbReference type="GeneID" id="29149"/>
<dbReference type="KEGG" id="rno:29149"/>
<dbReference type="UCSC" id="RGD:3782">
    <property type="organism name" value="rat"/>
</dbReference>
<dbReference type="AGR" id="RGD:3782"/>
<dbReference type="CTD" id="6801"/>
<dbReference type="RGD" id="3782">
    <property type="gene designation" value="Strn"/>
</dbReference>
<dbReference type="eggNOG" id="KOG0642">
    <property type="taxonomic scope" value="Eukaryota"/>
</dbReference>
<dbReference type="InParanoid" id="P70483"/>
<dbReference type="OrthoDB" id="727118at2759"/>
<dbReference type="PhylomeDB" id="P70483"/>
<dbReference type="Reactome" id="R-RNO-1257604">
    <property type="pathway name" value="PIP3 activates AKT signaling"/>
</dbReference>
<dbReference type="Reactome" id="R-RNO-6811558">
    <property type="pathway name" value="PI5P, PP2A and IER3 Regulate PI3K/AKT Signaling"/>
</dbReference>
<dbReference type="Reactome" id="R-RNO-9009391">
    <property type="pathway name" value="Extra-nuclear estrogen signaling"/>
</dbReference>
<dbReference type="PRO" id="PR:P70483"/>
<dbReference type="Proteomes" id="UP000002494">
    <property type="component" value="Unplaced"/>
</dbReference>
<dbReference type="GO" id="GO:0005923">
    <property type="term" value="C:bicellular tight junction"/>
    <property type="evidence" value="ECO:0000266"/>
    <property type="project" value="RGD"/>
</dbReference>
<dbReference type="GO" id="GO:0005737">
    <property type="term" value="C:cytoplasm"/>
    <property type="evidence" value="ECO:0007669"/>
    <property type="project" value="UniProtKB-SubCell"/>
</dbReference>
<dbReference type="GO" id="GO:0030425">
    <property type="term" value="C:dendrite"/>
    <property type="evidence" value="ECO:0000318"/>
    <property type="project" value="GO_Central"/>
</dbReference>
<dbReference type="GO" id="GO:0043197">
    <property type="term" value="C:dendritic spine"/>
    <property type="evidence" value="ECO:0000314"/>
    <property type="project" value="RGD"/>
</dbReference>
<dbReference type="GO" id="GO:0090443">
    <property type="term" value="C:FAR/SIN/STRIPAK complex"/>
    <property type="evidence" value="ECO:0000266"/>
    <property type="project" value="RGD"/>
</dbReference>
<dbReference type="GO" id="GO:0098978">
    <property type="term" value="C:glutamatergic synapse"/>
    <property type="evidence" value="ECO:0000314"/>
    <property type="project" value="SynGO"/>
</dbReference>
<dbReference type="GO" id="GO:0043025">
    <property type="term" value="C:neuronal cell body"/>
    <property type="evidence" value="ECO:0000314"/>
    <property type="project" value="RGD"/>
</dbReference>
<dbReference type="GO" id="GO:0098794">
    <property type="term" value="C:postsynapse"/>
    <property type="evidence" value="ECO:0000314"/>
    <property type="project" value="SynGO"/>
</dbReference>
<dbReference type="GO" id="GO:0014069">
    <property type="term" value="C:postsynaptic density"/>
    <property type="evidence" value="ECO:0000314"/>
    <property type="project" value="SynGO"/>
</dbReference>
<dbReference type="GO" id="GO:0045211">
    <property type="term" value="C:postsynaptic membrane"/>
    <property type="evidence" value="ECO:0000314"/>
    <property type="project" value="RGD"/>
</dbReference>
<dbReference type="GO" id="GO:0032991">
    <property type="term" value="C:protein-containing complex"/>
    <property type="evidence" value="ECO:0000314"/>
    <property type="project" value="RGD"/>
</dbReference>
<dbReference type="GO" id="GO:0070016">
    <property type="term" value="F:armadillo repeat domain binding"/>
    <property type="evidence" value="ECO:0000266"/>
    <property type="project" value="RGD"/>
</dbReference>
<dbReference type="GO" id="GO:0048306">
    <property type="term" value="F:calcium-dependent protein binding"/>
    <property type="evidence" value="ECO:0000303"/>
    <property type="project" value="RGD"/>
</dbReference>
<dbReference type="GO" id="GO:0005516">
    <property type="term" value="F:calmodulin binding"/>
    <property type="evidence" value="ECO:0000314"/>
    <property type="project" value="RGD"/>
</dbReference>
<dbReference type="GO" id="GO:0030331">
    <property type="term" value="F:nuclear estrogen receptor binding"/>
    <property type="evidence" value="ECO:0000266"/>
    <property type="project" value="RGD"/>
</dbReference>
<dbReference type="GO" id="GO:0019904">
    <property type="term" value="F:protein domain specific binding"/>
    <property type="evidence" value="ECO:0000353"/>
    <property type="project" value="RGD"/>
</dbReference>
<dbReference type="GO" id="GO:0051721">
    <property type="term" value="F:protein phosphatase 2A binding"/>
    <property type="evidence" value="ECO:0000266"/>
    <property type="project" value="RGD"/>
</dbReference>
<dbReference type="GO" id="GO:0044877">
    <property type="term" value="F:protein-containing complex binding"/>
    <property type="evidence" value="ECO:0000353"/>
    <property type="project" value="RGD"/>
</dbReference>
<dbReference type="GO" id="GO:0016358">
    <property type="term" value="P:dendrite development"/>
    <property type="evidence" value="ECO:0000315"/>
    <property type="project" value="RGD"/>
</dbReference>
<dbReference type="GO" id="GO:0007626">
    <property type="term" value="P:locomotory behavior"/>
    <property type="evidence" value="ECO:0000315"/>
    <property type="project" value="RGD"/>
</dbReference>
<dbReference type="GO" id="GO:0008285">
    <property type="term" value="P:negative regulation of cell population proliferation"/>
    <property type="evidence" value="ECO:0000266"/>
    <property type="project" value="RGD"/>
</dbReference>
<dbReference type="GO" id="GO:0099159">
    <property type="term" value="P:regulation of modification of postsynaptic structure"/>
    <property type="evidence" value="ECO:0000314"/>
    <property type="project" value="SynGO"/>
</dbReference>
<dbReference type="GO" id="GO:0009966">
    <property type="term" value="P:regulation of signal transduction"/>
    <property type="evidence" value="ECO:0000318"/>
    <property type="project" value="GO_Central"/>
</dbReference>
<dbReference type="GO" id="GO:0016055">
    <property type="term" value="P:Wnt signaling pathway"/>
    <property type="evidence" value="ECO:0000266"/>
    <property type="project" value="RGD"/>
</dbReference>
<dbReference type="CDD" id="cd00200">
    <property type="entry name" value="WD40"/>
    <property type="match status" value="1"/>
</dbReference>
<dbReference type="FunFam" id="2.130.10.10:FF:001505">
    <property type="entry name" value="Striatin"/>
    <property type="match status" value="1"/>
</dbReference>
<dbReference type="FunFam" id="1.20.5.300:FF:000001">
    <property type="entry name" value="striatin isoform X1"/>
    <property type="match status" value="1"/>
</dbReference>
<dbReference type="FunFam" id="2.130.10.10:FF:000079">
    <property type="entry name" value="striatin isoform X1"/>
    <property type="match status" value="1"/>
</dbReference>
<dbReference type="FunFam" id="2.130.10.10:FF:000211">
    <property type="entry name" value="striatin isoform X1"/>
    <property type="match status" value="1"/>
</dbReference>
<dbReference type="Gene3D" id="1.20.5.300">
    <property type="match status" value="1"/>
</dbReference>
<dbReference type="Gene3D" id="2.130.10.10">
    <property type="entry name" value="YVTN repeat-like/Quinoprotein amine dehydrogenase"/>
    <property type="match status" value="2"/>
</dbReference>
<dbReference type="InterPro" id="IPR020472">
    <property type="entry name" value="G-protein_beta_WD-40_rep"/>
</dbReference>
<dbReference type="InterPro" id="IPR013258">
    <property type="entry name" value="Striatin_N"/>
</dbReference>
<dbReference type="InterPro" id="IPR015943">
    <property type="entry name" value="WD40/YVTN_repeat-like_dom_sf"/>
</dbReference>
<dbReference type="InterPro" id="IPR019775">
    <property type="entry name" value="WD40_repeat_CS"/>
</dbReference>
<dbReference type="InterPro" id="IPR036322">
    <property type="entry name" value="WD40_repeat_dom_sf"/>
</dbReference>
<dbReference type="InterPro" id="IPR001680">
    <property type="entry name" value="WD40_rpt"/>
</dbReference>
<dbReference type="InterPro" id="IPR051488">
    <property type="entry name" value="WD_repeat_striatin"/>
</dbReference>
<dbReference type="PANTHER" id="PTHR15653">
    <property type="entry name" value="STRIATIN"/>
    <property type="match status" value="1"/>
</dbReference>
<dbReference type="PANTHER" id="PTHR15653:SF2">
    <property type="entry name" value="STRIATIN"/>
    <property type="match status" value="1"/>
</dbReference>
<dbReference type="Pfam" id="PF08232">
    <property type="entry name" value="Striatin"/>
    <property type="match status" value="1"/>
</dbReference>
<dbReference type="Pfam" id="PF00400">
    <property type="entry name" value="WD40"/>
    <property type="match status" value="5"/>
</dbReference>
<dbReference type="PRINTS" id="PR00320">
    <property type="entry name" value="GPROTEINBRPT"/>
</dbReference>
<dbReference type="SMART" id="SM00320">
    <property type="entry name" value="WD40"/>
    <property type="match status" value="6"/>
</dbReference>
<dbReference type="SUPFAM" id="SSF50978">
    <property type="entry name" value="WD40 repeat-like"/>
    <property type="match status" value="1"/>
</dbReference>
<dbReference type="PROSITE" id="PS00678">
    <property type="entry name" value="WD_REPEATS_1"/>
    <property type="match status" value="2"/>
</dbReference>
<dbReference type="PROSITE" id="PS50082">
    <property type="entry name" value="WD_REPEATS_2"/>
    <property type="match status" value="4"/>
</dbReference>
<dbReference type="PROSITE" id="PS50294">
    <property type="entry name" value="WD_REPEATS_REGION"/>
    <property type="match status" value="1"/>
</dbReference>
<protein>
    <recommendedName>
        <fullName>Striatin</fullName>
    </recommendedName>
</protein>
<feature type="chain" id="PRO_0000051234" description="Striatin">
    <location>
        <begin position="1"/>
        <end position="780"/>
    </location>
</feature>
<feature type="repeat" description="WD 1" evidence="3">
    <location>
        <begin position="461"/>
        <end position="500"/>
    </location>
</feature>
<feature type="repeat" description="WD 2" evidence="3">
    <location>
        <begin position="514"/>
        <end position="553"/>
    </location>
</feature>
<feature type="repeat" description="WD 3" evidence="3">
    <location>
        <begin position="567"/>
        <end position="606"/>
    </location>
</feature>
<feature type="repeat" description="WD 4" evidence="3">
    <location>
        <begin position="662"/>
        <end position="701"/>
    </location>
</feature>
<feature type="repeat" description="WD 5" evidence="3">
    <location>
        <begin position="704"/>
        <end position="743"/>
    </location>
</feature>
<feature type="repeat" description="WD 6" evidence="3">
    <location>
        <begin position="750"/>
        <end position="780"/>
    </location>
</feature>
<feature type="region of interest" description="Caveolin-binding" evidence="3">
    <location>
        <begin position="55"/>
        <end position="63"/>
    </location>
</feature>
<feature type="region of interest" description="Disordered" evidence="4">
    <location>
        <begin position="124"/>
        <end position="145"/>
    </location>
</feature>
<feature type="region of interest" description="Calmodulin-binding" evidence="3">
    <location>
        <begin position="149"/>
        <end position="166"/>
    </location>
</feature>
<feature type="region of interest" description="Disordered" evidence="4">
    <location>
        <begin position="290"/>
        <end position="321"/>
    </location>
</feature>
<feature type="region of interest" description="Disordered" evidence="4">
    <location>
        <begin position="334"/>
        <end position="353"/>
    </location>
</feature>
<feature type="region of interest" description="Disordered" evidence="4">
    <location>
        <begin position="363"/>
        <end position="388"/>
    </location>
</feature>
<feature type="coiled-coil region" evidence="3">
    <location>
        <begin position="53"/>
        <end position="120"/>
    </location>
</feature>
<feature type="compositionally biased region" description="Basic and acidic residues" evidence="4">
    <location>
        <begin position="299"/>
        <end position="315"/>
    </location>
</feature>
<feature type="compositionally biased region" description="Basic residues" evidence="4">
    <location>
        <begin position="338"/>
        <end position="351"/>
    </location>
</feature>
<feature type="modified residue" description="Phosphoserine" evidence="2">
    <location>
        <position position="137"/>
    </location>
</feature>
<feature type="modified residue" description="Phosphothreonine" evidence="2">
    <location>
        <position position="225"/>
    </location>
</feature>
<feature type="modified residue" description="Phosphoserine" evidence="1">
    <location>
        <position position="227"/>
    </location>
</feature>
<feature type="modified residue" description="Phosphoserine" evidence="1">
    <location>
        <position position="229"/>
    </location>
</feature>
<feature type="modified residue" description="Phosphoserine" evidence="8">
    <location>
        <position position="245"/>
    </location>
</feature>
<feature type="modified residue" description="Phosphoserine" evidence="1">
    <location>
        <position position="259"/>
    </location>
</feature>
<organism>
    <name type="scientific">Rattus norvegicus</name>
    <name type="common">Rat</name>
    <dbReference type="NCBI Taxonomy" id="10116"/>
    <lineage>
        <taxon>Eukaryota</taxon>
        <taxon>Metazoa</taxon>
        <taxon>Chordata</taxon>
        <taxon>Craniata</taxon>
        <taxon>Vertebrata</taxon>
        <taxon>Euteleostomi</taxon>
        <taxon>Mammalia</taxon>
        <taxon>Eutheria</taxon>
        <taxon>Euarchontoglires</taxon>
        <taxon>Glires</taxon>
        <taxon>Rodentia</taxon>
        <taxon>Myomorpha</taxon>
        <taxon>Muroidea</taxon>
        <taxon>Muridae</taxon>
        <taxon>Murinae</taxon>
        <taxon>Rattus</taxon>
    </lineage>
</organism>
<sequence length="780" mass="86226">MDEQAGPGVFFSNNHPGAGGAKGLGPLAEAAAAGDGAAAAGAARAQYSLPGILHFLQHEWARFEVERAQWEVERAELQAQIAFLQGERKGQENLKKDLVRRIKMLEYALKQERAKYHKLKYGTELNQGDMKPPSYDSDEGNETEVQPQQNSQFMWKQGRQLLRQYLQEVGYTDTILDVKSKRVRALLGFSSDVTDREDDKNQDSVINGTEAEVKETAMIGKSELTDSASVLDNFKFLENAAADFSDEDEDEDIDGREKSVIDTSTIVRKKPLPDTSEDRDTKEALKEFDFLVASEEGDNESRSAGDGTDWEKEDQCLTPERWNVDQGVITRLKEQYKKERKGKKGVKRPNRSKLQDMLANLRDVDELPSLQPSVGSPSRPSSSRLPEQDISRADEVEALTFPPSSGKSFIMGADEALESELGLGELAGLTVANEADSLAYDIANNKDALRKTWNPKFTLRSHFDGIRALAFHPIEPVLITASEDHTLKMWNLQKTAPAKKSTSLDVEPIYTFRAHKGPVLCVVMSSNGEQCYSGGTDGLIQSWSTTNPNVDPYDSYDPSVLRGPLLGHTDAVWGLAYSAAHQRLLSCSADGTLRLWTTTEVAPALTVFNDNQELGIPASVDLVSSDPSHMVASFSKGYTSIFNMETQQRILTLESNVDSTASSSCQINRVISHPTLPISITAHEDRHIKFYDNNTGKLIHSMVAHLEAVTSLAVDPNGLYLMSGSHDCSIRLWNLESKTCIQEFTAHRKKFEESIHDVAFHPSKCYIASAGADALAKVFV</sequence>